<reference key="1">
    <citation type="journal article" date="2009" name="Appl. Environ. Microbiol.">
        <title>Novel features of the polysaccharide-digesting gliding bacterium Flavobacterium johnsoniae as revealed by genome sequence analysis.</title>
        <authorList>
            <person name="McBride M.J."/>
            <person name="Xie G."/>
            <person name="Martens E.C."/>
            <person name="Lapidus A."/>
            <person name="Henrissat B."/>
            <person name="Rhodes R.G."/>
            <person name="Goltsman E."/>
            <person name="Wang W."/>
            <person name="Xu J."/>
            <person name="Hunnicutt D.W."/>
            <person name="Staroscik A.M."/>
            <person name="Hoover T.R."/>
            <person name="Cheng Y.Q."/>
            <person name="Stein J.L."/>
        </authorList>
    </citation>
    <scope>NUCLEOTIDE SEQUENCE [LARGE SCALE GENOMIC DNA]</scope>
    <source>
        <strain>ATCC 17061 / DSM 2064 / JCM 8514 / BCRC 14874 / CCUG 350202 / NBRC 14942 / NCIMB 11054 / UW101</strain>
    </source>
</reference>
<feature type="chain" id="PRO_1000076944" description="Peptide deformylase">
    <location>
        <begin position="1"/>
        <end position="196"/>
    </location>
</feature>
<feature type="active site" evidence="1">
    <location>
        <position position="148"/>
    </location>
</feature>
<feature type="binding site" evidence="1">
    <location>
        <position position="105"/>
    </location>
    <ligand>
        <name>Fe cation</name>
        <dbReference type="ChEBI" id="CHEBI:24875"/>
    </ligand>
</feature>
<feature type="binding site" evidence="1">
    <location>
        <position position="147"/>
    </location>
    <ligand>
        <name>Fe cation</name>
        <dbReference type="ChEBI" id="CHEBI:24875"/>
    </ligand>
</feature>
<feature type="binding site" evidence="1">
    <location>
        <position position="151"/>
    </location>
    <ligand>
        <name>Fe cation</name>
        <dbReference type="ChEBI" id="CHEBI:24875"/>
    </ligand>
</feature>
<evidence type="ECO:0000255" key="1">
    <source>
        <dbReference type="HAMAP-Rule" id="MF_00163"/>
    </source>
</evidence>
<keyword id="KW-0378">Hydrolase</keyword>
<keyword id="KW-0408">Iron</keyword>
<keyword id="KW-0479">Metal-binding</keyword>
<keyword id="KW-0648">Protein biosynthesis</keyword>
<proteinExistence type="inferred from homology"/>
<organism>
    <name type="scientific">Flavobacterium johnsoniae (strain ATCC 17061 / DSM 2064 / JCM 8514 / BCRC 14874 / CCUG 350202 / NBRC 14942 / NCIMB 11054 / UW101)</name>
    <name type="common">Cytophaga johnsonae</name>
    <dbReference type="NCBI Taxonomy" id="376686"/>
    <lineage>
        <taxon>Bacteria</taxon>
        <taxon>Pseudomonadati</taxon>
        <taxon>Bacteroidota</taxon>
        <taxon>Flavobacteriia</taxon>
        <taxon>Flavobacteriales</taxon>
        <taxon>Flavobacteriaceae</taxon>
        <taxon>Flavobacterium</taxon>
    </lineage>
</organism>
<name>DEF_FLAJ1</name>
<protein>
    <recommendedName>
        <fullName evidence="1">Peptide deformylase</fullName>
        <shortName evidence="1">PDF</shortName>
        <ecNumber evidence="1">3.5.1.88</ecNumber>
    </recommendedName>
    <alternativeName>
        <fullName evidence="1">Polypeptide deformylase</fullName>
    </alternativeName>
</protein>
<gene>
    <name evidence="1" type="primary">def</name>
    <name type="ordered locus">Fjoh_2532</name>
</gene>
<dbReference type="EC" id="3.5.1.88" evidence="1"/>
<dbReference type="EMBL" id="CP000685">
    <property type="protein sequence ID" value="ABQ05559.1"/>
    <property type="molecule type" value="Genomic_DNA"/>
</dbReference>
<dbReference type="RefSeq" id="WP_012024598.1">
    <property type="nucleotide sequence ID" value="NZ_MUGZ01000022.1"/>
</dbReference>
<dbReference type="SMR" id="A5FGV5"/>
<dbReference type="STRING" id="376686.Fjoh_2532"/>
<dbReference type="KEGG" id="fjo:Fjoh_2532"/>
<dbReference type="eggNOG" id="COG0242">
    <property type="taxonomic scope" value="Bacteria"/>
</dbReference>
<dbReference type="HOGENOM" id="CLU_061901_2_0_10"/>
<dbReference type="OrthoDB" id="9784988at2"/>
<dbReference type="Proteomes" id="UP000006694">
    <property type="component" value="Chromosome"/>
</dbReference>
<dbReference type="GO" id="GO:0046872">
    <property type="term" value="F:metal ion binding"/>
    <property type="evidence" value="ECO:0007669"/>
    <property type="project" value="UniProtKB-KW"/>
</dbReference>
<dbReference type="GO" id="GO:0042586">
    <property type="term" value="F:peptide deformylase activity"/>
    <property type="evidence" value="ECO:0007669"/>
    <property type="project" value="UniProtKB-UniRule"/>
</dbReference>
<dbReference type="GO" id="GO:0043686">
    <property type="term" value="P:co-translational protein modification"/>
    <property type="evidence" value="ECO:0007669"/>
    <property type="project" value="TreeGrafter"/>
</dbReference>
<dbReference type="GO" id="GO:0006412">
    <property type="term" value="P:translation"/>
    <property type="evidence" value="ECO:0007669"/>
    <property type="project" value="UniProtKB-UniRule"/>
</dbReference>
<dbReference type="CDD" id="cd00487">
    <property type="entry name" value="Pep_deformylase"/>
    <property type="match status" value="1"/>
</dbReference>
<dbReference type="Gene3D" id="3.90.45.10">
    <property type="entry name" value="Peptide deformylase"/>
    <property type="match status" value="1"/>
</dbReference>
<dbReference type="HAMAP" id="MF_00163">
    <property type="entry name" value="Pep_deformylase"/>
    <property type="match status" value="1"/>
</dbReference>
<dbReference type="InterPro" id="IPR023635">
    <property type="entry name" value="Peptide_deformylase"/>
</dbReference>
<dbReference type="InterPro" id="IPR036821">
    <property type="entry name" value="Peptide_deformylase_sf"/>
</dbReference>
<dbReference type="NCBIfam" id="TIGR00079">
    <property type="entry name" value="pept_deformyl"/>
    <property type="match status" value="1"/>
</dbReference>
<dbReference type="NCBIfam" id="NF001159">
    <property type="entry name" value="PRK00150.1-3"/>
    <property type="match status" value="1"/>
</dbReference>
<dbReference type="PANTHER" id="PTHR10458">
    <property type="entry name" value="PEPTIDE DEFORMYLASE"/>
    <property type="match status" value="1"/>
</dbReference>
<dbReference type="PANTHER" id="PTHR10458:SF22">
    <property type="entry name" value="PEPTIDE DEFORMYLASE"/>
    <property type="match status" value="1"/>
</dbReference>
<dbReference type="Pfam" id="PF01327">
    <property type="entry name" value="Pep_deformylase"/>
    <property type="match status" value="1"/>
</dbReference>
<dbReference type="PIRSF" id="PIRSF004749">
    <property type="entry name" value="Pep_def"/>
    <property type="match status" value="1"/>
</dbReference>
<dbReference type="PRINTS" id="PR01576">
    <property type="entry name" value="PDEFORMYLASE"/>
</dbReference>
<dbReference type="SUPFAM" id="SSF56420">
    <property type="entry name" value="Peptide deformylase"/>
    <property type="match status" value="1"/>
</dbReference>
<accession>A5FGV5</accession>
<comment type="function">
    <text evidence="1">Removes the formyl group from the N-terminal Met of newly synthesized proteins. Requires at least a dipeptide for an efficient rate of reaction. N-terminal L-methionine is a prerequisite for activity but the enzyme has broad specificity at other positions.</text>
</comment>
<comment type="catalytic activity">
    <reaction evidence="1">
        <text>N-terminal N-formyl-L-methionyl-[peptide] + H2O = N-terminal L-methionyl-[peptide] + formate</text>
        <dbReference type="Rhea" id="RHEA:24420"/>
        <dbReference type="Rhea" id="RHEA-COMP:10639"/>
        <dbReference type="Rhea" id="RHEA-COMP:10640"/>
        <dbReference type="ChEBI" id="CHEBI:15377"/>
        <dbReference type="ChEBI" id="CHEBI:15740"/>
        <dbReference type="ChEBI" id="CHEBI:49298"/>
        <dbReference type="ChEBI" id="CHEBI:64731"/>
        <dbReference type="EC" id="3.5.1.88"/>
    </reaction>
</comment>
<comment type="cofactor">
    <cofactor evidence="1">
        <name>Fe(2+)</name>
        <dbReference type="ChEBI" id="CHEBI:29033"/>
    </cofactor>
    <text evidence="1">Binds 1 Fe(2+) ion.</text>
</comment>
<comment type="similarity">
    <text evidence="1">Belongs to the polypeptide deformylase family.</text>
</comment>
<sequence>MILPIVGYGDPVLRKVGTAITPDYPNLKETIANMYETMYNAYGVGLAAPQVGLPIRIFVIDTTPFSDDEDLPADEQKDLKGFKRTFINAKIVKEEGEEWSFNEGCLSIPDVREDVYRKPTVTIEYCEEDFVMKTEVFDGLIARVIQHEYDHIEGVLFTDKISSLKKRLIQKKLKNITEGKTFQEYRMKFAAAKKGR</sequence>